<feature type="chain" id="PRO_0000224273" description="Adenylosuccinate synthetase">
    <location>
        <begin position="1"/>
        <end position="423"/>
    </location>
</feature>
<feature type="active site" description="Proton acceptor" evidence="1">
    <location>
        <position position="13"/>
    </location>
</feature>
<feature type="active site" description="Proton donor" evidence="1">
    <location>
        <position position="41"/>
    </location>
</feature>
<feature type="binding site" evidence="1">
    <location>
        <begin position="12"/>
        <end position="18"/>
    </location>
    <ligand>
        <name>GTP</name>
        <dbReference type="ChEBI" id="CHEBI:37565"/>
    </ligand>
</feature>
<feature type="binding site" description="in other chain" evidence="1">
    <location>
        <begin position="13"/>
        <end position="16"/>
    </location>
    <ligand>
        <name>IMP</name>
        <dbReference type="ChEBI" id="CHEBI:58053"/>
        <note>ligand shared between dimeric partners</note>
    </ligand>
</feature>
<feature type="binding site" evidence="1">
    <location>
        <position position="13"/>
    </location>
    <ligand>
        <name>Mg(2+)</name>
        <dbReference type="ChEBI" id="CHEBI:18420"/>
    </ligand>
</feature>
<feature type="binding site" description="in other chain" evidence="1">
    <location>
        <begin position="38"/>
        <end position="41"/>
    </location>
    <ligand>
        <name>IMP</name>
        <dbReference type="ChEBI" id="CHEBI:58053"/>
        <note>ligand shared between dimeric partners</note>
    </ligand>
</feature>
<feature type="binding site" evidence="1">
    <location>
        <begin position="40"/>
        <end position="42"/>
    </location>
    <ligand>
        <name>GTP</name>
        <dbReference type="ChEBI" id="CHEBI:37565"/>
    </ligand>
</feature>
<feature type="binding site" evidence="1">
    <location>
        <position position="40"/>
    </location>
    <ligand>
        <name>Mg(2+)</name>
        <dbReference type="ChEBI" id="CHEBI:18420"/>
    </ligand>
</feature>
<feature type="binding site" description="in other chain" evidence="1">
    <location>
        <position position="128"/>
    </location>
    <ligand>
        <name>IMP</name>
        <dbReference type="ChEBI" id="CHEBI:58053"/>
        <note>ligand shared between dimeric partners</note>
    </ligand>
</feature>
<feature type="binding site" evidence="1">
    <location>
        <position position="142"/>
    </location>
    <ligand>
        <name>IMP</name>
        <dbReference type="ChEBI" id="CHEBI:58053"/>
        <note>ligand shared between dimeric partners</note>
    </ligand>
</feature>
<feature type="binding site" description="in other chain" evidence="1">
    <location>
        <position position="223"/>
    </location>
    <ligand>
        <name>IMP</name>
        <dbReference type="ChEBI" id="CHEBI:58053"/>
        <note>ligand shared between dimeric partners</note>
    </ligand>
</feature>
<feature type="binding site" description="in other chain" evidence="1">
    <location>
        <position position="238"/>
    </location>
    <ligand>
        <name>IMP</name>
        <dbReference type="ChEBI" id="CHEBI:58053"/>
        <note>ligand shared between dimeric partners</note>
    </ligand>
</feature>
<feature type="binding site" evidence="1">
    <location>
        <begin position="298"/>
        <end position="304"/>
    </location>
    <ligand>
        <name>substrate</name>
    </ligand>
</feature>
<feature type="binding site" description="in other chain" evidence="1">
    <location>
        <position position="302"/>
    </location>
    <ligand>
        <name>IMP</name>
        <dbReference type="ChEBI" id="CHEBI:58053"/>
        <note>ligand shared between dimeric partners</note>
    </ligand>
</feature>
<feature type="binding site" evidence="1">
    <location>
        <position position="304"/>
    </location>
    <ligand>
        <name>GTP</name>
        <dbReference type="ChEBI" id="CHEBI:37565"/>
    </ligand>
</feature>
<feature type="binding site" evidence="1">
    <location>
        <begin position="330"/>
        <end position="332"/>
    </location>
    <ligand>
        <name>GTP</name>
        <dbReference type="ChEBI" id="CHEBI:37565"/>
    </ligand>
</feature>
<feature type="binding site" evidence="1">
    <location>
        <begin position="412"/>
        <end position="414"/>
    </location>
    <ligand>
        <name>GTP</name>
        <dbReference type="ChEBI" id="CHEBI:37565"/>
    </ligand>
</feature>
<keyword id="KW-0963">Cytoplasm</keyword>
<keyword id="KW-0342">GTP-binding</keyword>
<keyword id="KW-0436">Ligase</keyword>
<keyword id="KW-0460">Magnesium</keyword>
<keyword id="KW-0479">Metal-binding</keyword>
<keyword id="KW-0547">Nucleotide-binding</keyword>
<keyword id="KW-0658">Purine biosynthesis</keyword>
<evidence type="ECO:0000255" key="1">
    <source>
        <dbReference type="HAMAP-Rule" id="MF_00011"/>
    </source>
</evidence>
<protein>
    <recommendedName>
        <fullName evidence="1">Adenylosuccinate synthetase</fullName>
        <shortName evidence="1">AMPSase</shortName>
        <shortName evidence="1">AdSS</shortName>
        <ecNumber evidence="1">6.3.4.4</ecNumber>
    </recommendedName>
    <alternativeName>
        <fullName evidence="1">IMP--aspartate ligase</fullName>
    </alternativeName>
</protein>
<gene>
    <name evidence="1" type="primary">purA</name>
    <name type="ordered locus">cbdbA939</name>
</gene>
<comment type="function">
    <text evidence="1">Plays an important role in the de novo pathway of purine nucleotide biosynthesis. Catalyzes the first committed step in the biosynthesis of AMP from IMP.</text>
</comment>
<comment type="catalytic activity">
    <reaction evidence="1">
        <text>IMP + L-aspartate + GTP = N(6)-(1,2-dicarboxyethyl)-AMP + GDP + phosphate + 2 H(+)</text>
        <dbReference type="Rhea" id="RHEA:15753"/>
        <dbReference type="ChEBI" id="CHEBI:15378"/>
        <dbReference type="ChEBI" id="CHEBI:29991"/>
        <dbReference type="ChEBI" id="CHEBI:37565"/>
        <dbReference type="ChEBI" id="CHEBI:43474"/>
        <dbReference type="ChEBI" id="CHEBI:57567"/>
        <dbReference type="ChEBI" id="CHEBI:58053"/>
        <dbReference type="ChEBI" id="CHEBI:58189"/>
        <dbReference type="EC" id="6.3.4.4"/>
    </reaction>
</comment>
<comment type="cofactor">
    <cofactor evidence="1">
        <name>Mg(2+)</name>
        <dbReference type="ChEBI" id="CHEBI:18420"/>
    </cofactor>
    <text evidence="1">Binds 1 Mg(2+) ion per subunit.</text>
</comment>
<comment type="pathway">
    <text evidence="1">Purine metabolism; AMP biosynthesis via de novo pathway; AMP from IMP: step 1/2.</text>
</comment>
<comment type="subunit">
    <text evidence="1">Homodimer.</text>
</comment>
<comment type="subcellular location">
    <subcellularLocation>
        <location evidence="1">Cytoplasm</location>
    </subcellularLocation>
</comment>
<comment type="similarity">
    <text evidence="1">Belongs to the adenylosuccinate synthetase family.</text>
</comment>
<sequence length="423" mass="46283">MPVTAIVGGQWGDEGKGKVVDMLAQEADYVVRFSGGDNAGHTVINPMGEFKLHIIPSGVFYPGVKCIIGNGVVINPDVFIRERNELISRGVNVSNVFISDRAHLVLPYHILLDGLEEEARGNKSLGTTRRGIGPAFVDKYARMGIRVGDLLLPEYLRERLEYVLECKNQILTKVYDAAPISLDEIYETCLKWGKELAPNIRETTHIIEEAISQDKKIIMEGAQGALLDPDFGTYPYGTSSSPLAAGGCLGIGIGPASVSATLGVFKAYSTRVGGGPMPTELLDKTGDTIRNEAHEYGTTTGRPRRIGWFDAVAGRFSCQINGMTTAIMTRLDIMDILPKISICTAYELNGKIIKYFPANSGELAKCKPIYEEMPGWLCSTKEVRNYDDLPEAAKAYICRIEKLIGCQMSAVCIGPSREQTIYK</sequence>
<dbReference type="EC" id="6.3.4.4" evidence="1"/>
<dbReference type="EMBL" id="AJ965256">
    <property type="protein sequence ID" value="CAI83066.1"/>
    <property type="molecule type" value="Genomic_DNA"/>
</dbReference>
<dbReference type="RefSeq" id="WP_011309417.1">
    <property type="nucleotide sequence ID" value="NC_007356.1"/>
</dbReference>
<dbReference type="SMR" id="Q3ZXV0"/>
<dbReference type="KEGG" id="deh:cbdbA939"/>
<dbReference type="HOGENOM" id="CLU_029848_0_0_0"/>
<dbReference type="UniPathway" id="UPA00075">
    <property type="reaction ID" value="UER00335"/>
</dbReference>
<dbReference type="Proteomes" id="UP000000433">
    <property type="component" value="Chromosome"/>
</dbReference>
<dbReference type="GO" id="GO:0005737">
    <property type="term" value="C:cytoplasm"/>
    <property type="evidence" value="ECO:0007669"/>
    <property type="project" value="UniProtKB-SubCell"/>
</dbReference>
<dbReference type="GO" id="GO:0004019">
    <property type="term" value="F:adenylosuccinate synthase activity"/>
    <property type="evidence" value="ECO:0007669"/>
    <property type="project" value="UniProtKB-UniRule"/>
</dbReference>
<dbReference type="GO" id="GO:0005525">
    <property type="term" value="F:GTP binding"/>
    <property type="evidence" value="ECO:0007669"/>
    <property type="project" value="UniProtKB-UniRule"/>
</dbReference>
<dbReference type="GO" id="GO:0000287">
    <property type="term" value="F:magnesium ion binding"/>
    <property type="evidence" value="ECO:0007669"/>
    <property type="project" value="UniProtKB-UniRule"/>
</dbReference>
<dbReference type="GO" id="GO:0044208">
    <property type="term" value="P:'de novo' AMP biosynthetic process"/>
    <property type="evidence" value="ECO:0007669"/>
    <property type="project" value="UniProtKB-UniRule"/>
</dbReference>
<dbReference type="GO" id="GO:0046040">
    <property type="term" value="P:IMP metabolic process"/>
    <property type="evidence" value="ECO:0007669"/>
    <property type="project" value="TreeGrafter"/>
</dbReference>
<dbReference type="CDD" id="cd03108">
    <property type="entry name" value="AdSS"/>
    <property type="match status" value="1"/>
</dbReference>
<dbReference type="FunFam" id="1.10.300.10:FF:000001">
    <property type="entry name" value="Adenylosuccinate synthetase"/>
    <property type="match status" value="1"/>
</dbReference>
<dbReference type="FunFam" id="3.90.170.10:FF:000001">
    <property type="entry name" value="Adenylosuccinate synthetase"/>
    <property type="match status" value="1"/>
</dbReference>
<dbReference type="Gene3D" id="3.40.440.10">
    <property type="entry name" value="Adenylosuccinate Synthetase, subunit A, domain 1"/>
    <property type="match status" value="1"/>
</dbReference>
<dbReference type="Gene3D" id="1.10.300.10">
    <property type="entry name" value="Adenylosuccinate Synthetase, subunit A, domain 2"/>
    <property type="match status" value="1"/>
</dbReference>
<dbReference type="Gene3D" id="3.90.170.10">
    <property type="entry name" value="Adenylosuccinate Synthetase, subunit A, domain 3"/>
    <property type="match status" value="1"/>
</dbReference>
<dbReference type="HAMAP" id="MF_00011">
    <property type="entry name" value="Adenylosucc_synth"/>
    <property type="match status" value="1"/>
</dbReference>
<dbReference type="InterPro" id="IPR018220">
    <property type="entry name" value="Adenylosuccin_syn_GTP-bd"/>
</dbReference>
<dbReference type="InterPro" id="IPR042109">
    <property type="entry name" value="Adenylosuccinate_synth_dom1"/>
</dbReference>
<dbReference type="InterPro" id="IPR042110">
    <property type="entry name" value="Adenylosuccinate_synth_dom2"/>
</dbReference>
<dbReference type="InterPro" id="IPR042111">
    <property type="entry name" value="Adenylosuccinate_synth_dom3"/>
</dbReference>
<dbReference type="InterPro" id="IPR001114">
    <property type="entry name" value="Adenylosuccinate_synthetase"/>
</dbReference>
<dbReference type="InterPro" id="IPR027417">
    <property type="entry name" value="P-loop_NTPase"/>
</dbReference>
<dbReference type="NCBIfam" id="NF002223">
    <property type="entry name" value="PRK01117.1"/>
    <property type="match status" value="1"/>
</dbReference>
<dbReference type="NCBIfam" id="TIGR00184">
    <property type="entry name" value="purA"/>
    <property type="match status" value="1"/>
</dbReference>
<dbReference type="PANTHER" id="PTHR11846">
    <property type="entry name" value="ADENYLOSUCCINATE SYNTHETASE"/>
    <property type="match status" value="1"/>
</dbReference>
<dbReference type="PANTHER" id="PTHR11846:SF0">
    <property type="entry name" value="ADENYLOSUCCINATE SYNTHETASE"/>
    <property type="match status" value="1"/>
</dbReference>
<dbReference type="Pfam" id="PF00709">
    <property type="entry name" value="Adenylsucc_synt"/>
    <property type="match status" value="1"/>
</dbReference>
<dbReference type="SMART" id="SM00788">
    <property type="entry name" value="Adenylsucc_synt"/>
    <property type="match status" value="1"/>
</dbReference>
<dbReference type="SUPFAM" id="SSF52540">
    <property type="entry name" value="P-loop containing nucleoside triphosphate hydrolases"/>
    <property type="match status" value="1"/>
</dbReference>
<dbReference type="PROSITE" id="PS01266">
    <property type="entry name" value="ADENYLOSUCCIN_SYN_1"/>
    <property type="match status" value="1"/>
</dbReference>
<name>PURA_DEHMC</name>
<accession>Q3ZXV0</accession>
<organism>
    <name type="scientific">Dehalococcoides mccartyi (strain CBDB1)</name>
    <dbReference type="NCBI Taxonomy" id="255470"/>
    <lineage>
        <taxon>Bacteria</taxon>
        <taxon>Bacillati</taxon>
        <taxon>Chloroflexota</taxon>
        <taxon>Dehalococcoidia</taxon>
        <taxon>Dehalococcoidales</taxon>
        <taxon>Dehalococcoidaceae</taxon>
        <taxon>Dehalococcoides</taxon>
    </lineage>
</organism>
<reference key="1">
    <citation type="journal article" date="2005" name="Nat. Biotechnol.">
        <title>Genome sequence of the chlorinated compound-respiring bacterium Dehalococcoides species strain CBDB1.</title>
        <authorList>
            <person name="Kube M."/>
            <person name="Beck A."/>
            <person name="Zinder S.H."/>
            <person name="Kuhl H."/>
            <person name="Reinhardt R."/>
            <person name="Adrian L."/>
        </authorList>
    </citation>
    <scope>NUCLEOTIDE SEQUENCE [LARGE SCALE GENOMIC DNA]</scope>
    <source>
        <strain>CBDB1</strain>
    </source>
</reference>
<proteinExistence type="inferred from homology"/>